<feature type="chain" id="PRO_0000361197" description="Putative S-adenosyl-L-methionine-dependent methyltransferase MSMEG_1481/MSMEI_1445">
    <location>
        <begin position="1"/>
        <end position="304"/>
    </location>
</feature>
<feature type="binding site" evidence="1">
    <location>
        <position position="127"/>
    </location>
    <ligand>
        <name>S-adenosyl-L-methionine</name>
        <dbReference type="ChEBI" id="CHEBI:59789"/>
    </ligand>
</feature>
<feature type="binding site" evidence="1">
    <location>
        <begin position="156"/>
        <end position="157"/>
    </location>
    <ligand>
        <name>S-adenosyl-L-methionine</name>
        <dbReference type="ChEBI" id="CHEBI:59789"/>
    </ligand>
</feature>
<proteinExistence type="inferred from homology"/>
<gene>
    <name type="ordered locus">MSMEG_1481</name>
    <name type="ordered locus">MSMEI_1445</name>
</gene>
<comment type="function">
    <text evidence="1">Exhibits S-adenosyl-L-methionine-dependent methyltransferase activity.</text>
</comment>
<comment type="similarity">
    <text evidence="2">Belongs to the UPF0677 family.</text>
</comment>
<evidence type="ECO:0000250" key="1"/>
<evidence type="ECO:0000305" key="2"/>
<sequence length="304" mass="32703">MARTDTDSWDLASSVGATATMVAAARAIASTEPNALIDDPYAADLVRKVGLEFFTKLVDGDIALDGDDAAAAGLMVSMMAVRTRFFDDFFCDAAGAGIRQSVILAAGLDSRAYRLGWPAGTVVYEIDQPRVIEAKTAAMAEIGASPTAERRTVAVDLRDDWPAALRAAGFDAATPTAWIAEGLLVYLPPEAQDRLFDNITALSARGSRLATEYHPDITSTLRGRGQAMSERWRDHGFDVDLSDLWYGGDRNAADEYLAGHGWQVSTRPRPEVFAAYGRTFPDLTLTGDDNAAMRQSVAITATRS</sequence>
<keyword id="KW-0489">Methyltransferase</keyword>
<keyword id="KW-1185">Reference proteome</keyword>
<keyword id="KW-0949">S-adenosyl-L-methionine</keyword>
<keyword id="KW-0808">Transferase</keyword>
<accession>A0QSH5</accession>
<accession>I7FGE8</accession>
<organism>
    <name type="scientific">Mycolicibacterium smegmatis (strain ATCC 700084 / mc(2)155)</name>
    <name type="common">Mycobacterium smegmatis</name>
    <dbReference type="NCBI Taxonomy" id="246196"/>
    <lineage>
        <taxon>Bacteria</taxon>
        <taxon>Bacillati</taxon>
        <taxon>Actinomycetota</taxon>
        <taxon>Actinomycetes</taxon>
        <taxon>Mycobacteriales</taxon>
        <taxon>Mycobacteriaceae</taxon>
        <taxon>Mycolicibacterium</taxon>
    </lineage>
</organism>
<dbReference type="EC" id="2.1.1.-"/>
<dbReference type="EMBL" id="CP000480">
    <property type="protein sequence ID" value="ABK73326.1"/>
    <property type="molecule type" value="Genomic_DNA"/>
</dbReference>
<dbReference type="EMBL" id="CP001663">
    <property type="protein sequence ID" value="AFP37918.1"/>
    <property type="molecule type" value="Genomic_DNA"/>
</dbReference>
<dbReference type="RefSeq" id="WP_003892868.1">
    <property type="nucleotide sequence ID" value="NZ_SIJM01000016.1"/>
</dbReference>
<dbReference type="RefSeq" id="YP_885863.1">
    <property type="nucleotide sequence ID" value="NC_008596.1"/>
</dbReference>
<dbReference type="SMR" id="A0QSH5"/>
<dbReference type="STRING" id="246196.MSMEG_1481"/>
<dbReference type="PaxDb" id="246196-MSMEI_1445"/>
<dbReference type="KEGG" id="msb:LJ00_07400"/>
<dbReference type="KEGG" id="msg:MSMEI_1445"/>
<dbReference type="KEGG" id="msm:MSMEG_1481"/>
<dbReference type="PATRIC" id="fig|246196.19.peg.1466"/>
<dbReference type="eggNOG" id="COG3315">
    <property type="taxonomic scope" value="Bacteria"/>
</dbReference>
<dbReference type="OrthoDB" id="9806164at2"/>
<dbReference type="Proteomes" id="UP000000757">
    <property type="component" value="Chromosome"/>
</dbReference>
<dbReference type="Proteomes" id="UP000006158">
    <property type="component" value="Chromosome"/>
</dbReference>
<dbReference type="GO" id="GO:0008168">
    <property type="term" value="F:methyltransferase activity"/>
    <property type="evidence" value="ECO:0007669"/>
    <property type="project" value="UniProtKB-KW"/>
</dbReference>
<dbReference type="GO" id="GO:0032259">
    <property type="term" value="P:methylation"/>
    <property type="evidence" value="ECO:0007669"/>
    <property type="project" value="UniProtKB-KW"/>
</dbReference>
<dbReference type="FunFam" id="3.40.50.150:FF:000152">
    <property type="entry name" value="S-adenosyl-L-methionine-dependent methyltransferase"/>
    <property type="match status" value="1"/>
</dbReference>
<dbReference type="Gene3D" id="3.40.50.150">
    <property type="entry name" value="Vaccinia Virus protein VP39"/>
    <property type="match status" value="1"/>
</dbReference>
<dbReference type="InterPro" id="IPR007213">
    <property type="entry name" value="Ppm1/Ppm2/Tcmp"/>
</dbReference>
<dbReference type="InterPro" id="IPR029063">
    <property type="entry name" value="SAM-dependent_MTases_sf"/>
</dbReference>
<dbReference type="InterPro" id="IPR011610">
    <property type="entry name" value="SAM_mthyl_Trfase_ML2640-like"/>
</dbReference>
<dbReference type="NCBIfam" id="TIGR00027">
    <property type="entry name" value="mthyl_TIGR00027"/>
    <property type="match status" value="1"/>
</dbReference>
<dbReference type="PANTHER" id="PTHR43619">
    <property type="entry name" value="S-ADENOSYL-L-METHIONINE-DEPENDENT METHYLTRANSFERASE YKTD-RELATED"/>
    <property type="match status" value="1"/>
</dbReference>
<dbReference type="PANTHER" id="PTHR43619:SF2">
    <property type="entry name" value="S-ADENOSYL-L-METHIONINE-DEPENDENT METHYLTRANSFERASES SUPERFAMILY PROTEIN"/>
    <property type="match status" value="1"/>
</dbReference>
<dbReference type="Pfam" id="PF04072">
    <property type="entry name" value="LCM"/>
    <property type="match status" value="1"/>
</dbReference>
<dbReference type="SUPFAM" id="SSF53335">
    <property type="entry name" value="S-adenosyl-L-methionine-dependent methyltransferases"/>
    <property type="match status" value="1"/>
</dbReference>
<protein>
    <recommendedName>
        <fullName>Putative S-adenosyl-L-methionine-dependent methyltransferase MSMEG_1481/MSMEI_1445</fullName>
        <ecNumber>2.1.1.-</ecNumber>
    </recommendedName>
</protein>
<reference key="1">
    <citation type="submission" date="2006-10" db="EMBL/GenBank/DDBJ databases">
        <authorList>
            <person name="Fleischmann R.D."/>
            <person name="Dodson R.J."/>
            <person name="Haft D.H."/>
            <person name="Merkel J.S."/>
            <person name="Nelson W.C."/>
            <person name="Fraser C.M."/>
        </authorList>
    </citation>
    <scope>NUCLEOTIDE SEQUENCE [LARGE SCALE GENOMIC DNA]</scope>
    <source>
        <strain>ATCC 700084 / mc(2)155</strain>
    </source>
</reference>
<reference key="2">
    <citation type="journal article" date="2007" name="Genome Biol.">
        <title>Interrupted coding sequences in Mycobacterium smegmatis: authentic mutations or sequencing errors?</title>
        <authorList>
            <person name="Deshayes C."/>
            <person name="Perrodou E."/>
            <person name="Gallien S."/>
            <person name="Euphrasie D."/>
            <person name="Schaeffer C."/>
            <person name="Van-Dorsselaer A."/>
            <person name="Poch O."/>
            <person name="Lecompte O."/>
            <person name="Reyrat J.-M."/>
        </authorList>
    </citation>
    <scope>NUCLEOTIDE SEQUENCE [LARGE SCALE GENOMIC DNA]</scope>
    <source>
        <strain>ATCC 700084 / mc(2)155</strain>
    </source>
</reference>
<reference key="3">
    <citation type="journal article" date="2009" name="Genome Res.">
        <title>Ortho-proteogenomics: multiple proteomes investigation through orthology and a new MS-based protocol.</title>
        <authorList>
            <person name="Gallien S."/>
            <person name="Perrodou E."/>
            <person name="Carapito C."/>
            <person name="Deshayes C."/>
            <person name="Reyrat J.-M."/>
            <person name="Van Dorsselaer A."/>
            <person name="Poch O."/>
            <person name="Schaeffer C."/>
            <person name="Lecompte O."/>
        </authorList>
    </citation>
    <scope>NUCLEOTIDE SEQUENCE [LARGE SCALE GENOMIC DNA]</scope>
    <source>
        <strain>ATCC 700084 / mc(2)155</strain>
    </source>
</reference>
<name>Y1481_MYCS2</name>